<keyword id="KW-0903">Direct protein sequencing</keyword>
<keyword id="KW-0484">Methanogenesis</keyword>
<keyword id="KW-0560">Oxidoreductase</keyword>
<protein>
    <recommendedName>
        <fullName evidence="5">H(2):CoB-CoM heterodisulfide,ferredoxin reductase subunit B</fullName>
        <ecNumber evidence="3 6">1.8.98.5</ecNumber>
    </recommendedName>
    <alternativeName>
        <fullName evidence="5">CoB--CoM heterodisulfide reductase subunit B</fullName>
    </alternativeName>
</protein>
<gene>
    <name type="primary">hdrB</name>
    <name type="ordered locus">MTBMA_c04500</name>
</gene>
<name>HDRB_METTM</name>
<accession>Q50755</accession>
<accession>D9PV04</accession>
<sequence length="302" mass="33458">MEIAYFLGCIMNNRYPGIEKATRVLFDKLGIELKDMEGASCCPAPGVFGSFDKTTWAAIAARNITIAEDMGADIMTECNGCFGSLFETNHLLKEDEEMKAKINEILKETGREYKGEVNVRHFAEVLYNDVGLDKLSELVEKPLNLNVAVHYGCHFLKPSDEINIDNPERPTILDEIVEVTGAKSVEYKDKMMCCGAGGGVRSRDLDVALDFTREKLTNMKEAGVDAIVNVCPFCHLQFDVGQMEIKDKFGEEFDIPVLHLAQLLGLAMGLPKEDLVVDAHQVCVDECLEKLEELDRLAPGSG</sequence>
<organism>
    <name type="scientific">Methanothermobacter marburgensis (strain ATCC BAA-927 / DSM 2133 / JCM 14651 / NBRC 100331 / OCM 82 / Marburg)</name>
    <name type="common">Methanobacterium thermoautotrophicum</name>
    <dbReference type="NCBI Taxonomy" id="79929"/>
    <lineage>
        <taxon>Archaea</taxon>
        <taxon>Methanobacteriati</taxon>
        <taxon>Methanobacteriota</taxon>
        <taxon>Methanomada group</taxon>
        <taxon>Methanobacteria</taxon>
        <taxon>Methanobacteriales</taxon>
        <taxon>Methanobacteriaceae</taxon>
        <taxon>Methanothermobacter</taxon>
    </lineage>
</organism>
<reference key="1">
    <citation type="journal article" date="1994" name="Eur. J. Biochem.">
        <title>The heterodisulfide reductase from Methanobacterium thermoautotrophicum contains sequence motifs characteristic of pyridine-nucleotide-dependent thioredoxin reductases.</title>
        <authorList>
            <person name="Hedderich R."/>
            <person name="Koch J."/>
            <person name="Linder D."/>
            <person name="Thauer R.K."/>
        </authorList>
    </citation>
    <scope>NUCLEOTIDE SEQUENCE [GENOMIC DNA]</scope>
    <scope>PROTEIN SEQUENCE OF 1-33</scope>
    <source>
        <strain>ATCC BAA-927 / DSM 2133 / JCM 14651 / NBRC 100331 / OCM 82 / Marburg</strain>
    </source>
</reference>
<reference key="2">
    <citation type="journal article" date="2010" name="J. Bacteriol.">
        <title>Complete genome sequence of Methanothermobacter marburgensis, a methanoarchaeon model organism.</title>
        <authorList>
            <person name="Liesegang H."/>
            <person name="Kaster A.K."/>
            <person name="Wiezer A."/>
            <person name="Goenrich M."/>
            <person name="Wollherr A."/>
            <person name="Seedorf H."/>
            <person name="Gottschalk G."/>
            <person name="Thauer R.K."/>
        </authorList>
    </citation>
    <scope>NUCLEOTIDE SEQUENCE [LARGE SCALE GENOMIC DNA]</scope>
    <source>
        <strain>ATCC BAA-927 / DSM 2133 / JCM 14651 / NBRC 100331 / OCM 82 / Marburg</strain>
    </source>
</reference>
<reference key="3">
    <citation type="journal article" date="1994" name="Eur. J. Biochem.">
        <title>H2: heterodisulfide oxidoreductase complex from Methanobacterium thermoautotrophicum. Composition and properties.</title>
        <authorList>
            <person name="Setzke E."/>
            <person name="Hedderich R."/>
            <person name="Heiden S."/>
            <person name="Thauer R.K."/>
        </authorList>
    </citation>
    <scope>PROTEIN SEQUENCE OF 1-27</scope>
    <scope>FUNCTION</scope>
    <scope>CATALYTIC ACTIVITY</scope>
    <scope>SUBUNIT</scope>
    <scope>ASSOCIATION WITH F420-NON-REDUCING HYDROGENASE</scope>
    <source>
        <strain>ATCC BAA-927 / DSM 2133 / JCM 14651 / NBRC 100331 / OCM 82 / Marburg</strain>
    </source>
</reference>
<reference key="4">
    <citation type="journal article" date="1990" name="Eur. J. Biochem.">
        <title>Purification and properties of heterodisulfide reductase from Methanobacterium thermoautotrophicum (strain Marburg).</title>
        <authorList>
            <person name="Hedderich R."/>
            <person name="Berkessel A."/>
            <person name="Thauer R.K."/>
        </authorList>
    </citation>
    <scope>FUNCTION</scope>
    <scope>SUBUNIT</scope>
    <source>
        <strain>ATCC BAA-927 / DSM 2133 / JCM 14651 / NBRC 100331 / OCM 82 / Marburg</strain>
    </source>
</reference>
<reference key="5">
    <citation type="journal article" date="2003" name="Arch. Microbiol.">
        <title>Physiological role of the F420-non-reducing hydrogenase (Mvh) from Methanothermobacter marburgensis.</title>
        <authorList>
            <person name="Stojanowic A."/>
            <person name="Mander G.J."/>
            <person name="Duin E.C."/>
            <person name="Hedderich R."/>
        </authorList>
    </citation>
    <scope>ASSOCIATION WITH F420-NON-REDUCING HYDROGENASE</scope>
    <source>
        <strain>ATCC BAA-927 / DSM 2133 / JCM 14651 / NBRC 100331 / OCM 82 / Marburg</strain>
    </source>
</reference>
<reference key="6">
    <citation type="journal article" date="2011" name="Proc. Natl. Acad. Sci. U.S.A.">
        <title>Coupling of ferredoxin and heterodisulfide reduction via electron bifurcation in hydrogenotrophic methanogenic archaea.</title>
        <authorList>
            <person name="Kaster A.K."/>
            <person name="Moll J."/>
            <person name="Parey K."/>
            <person name="Thauer R.K."/>
        </authorList>
    </citation>
    <scope>FUNCTION</scope>
    <scope>CATALYTIC ACTIVITY</scope>
    <scope>SUBUNIT</scope>
    <source>
        <strain>ATCC BAA-927 / DSM 2133 / JCM 14651 / NBRC 100331 / OCM 82 / Marburg</strain>
    </source>
</reference>
<feature type="chain" id="PRO_0000150070" description="H(2):CoB-CoM heterodisulfide,ferredoxin reductase subunit B">
    <location>
        <begin position="1"/>
        <end position="302"/>
    </location>
</feature>
<evidence type="ECO:0000269" key="1">
    <source>
    </source>
</evidence>
<evidence type="ECO:0000269" key="2">
    <source>
    </source>
</evidence>
<evidence type="ECO:0000269" key="3">
    <source>
    </source>
</evidence>
<evidence type="ECO:0000269" key="4">
    <source>
    </source>
</evidence>
<evidence type="ECO:0000305" key="5"/>
<evidence type="ECO:0000305" key="6">
    <source>
    </source>
</evidence>
<proteinExistence type="evidence at protein level"/>
<dbReference type="EC" id="1.8.98.5" evidence="3 6"/>
<dbReference type="EMBL" id="X81133">
    <property type="protein sequence ID" value="CAA57038.1"/>
    <property type="molecule type" value="Genomic_DNA"/>
</dbReference>
<dbReference type="EMBL" id="CP001710">
    <property type="protein sequence ID" value="ADL58051.1"/>
    <property type="molecule type" value="Genomic_DNA"/>
</dbReference>
<dbReference type="PIR" id="S78509">
    <property type="entry name" value="S78509"/>
</dbReference>
<dbReference type="RefSeq" id="WP_013295277.1">
    <property type="nucleotide sequence ID" value="NC_014408.1"/>
</dbReference>
<dbReference type="SMR" id="Q50755"/>
<dbReference type="DIP" id="DIP-59607N"/>
<dbReference type="IntAct" id="Q50755">
    <property type="interactions" value="1"/>
</dbReference>
<dbReference type="STRING" id="79929.MTBMA_c04500"/>
<dbReference type="PaxDb" id="79929-MTBMA_c04500"/>
<dbReference type="GeneID" id="43708478"/>
<dbReference type="GeneID" id="9704156"/>
<dbReference type="KEGG" id="mmg:MTBMA_c04500"/>
<dbReference type="PATRIC" id="fig|79929.8.peg.440"/>
<dbReference type="HOGENOM" id="CLU_052147_1_0_2"/>
<dbReference type="OrthoDB" id="144689at2157"/>
<dbReference type="BRENDA" id="1.8.7.3">
    <property type="organism ID" value="7427"/>
</dbReference>
<dbReference type="BRENDA" id="1.8.98.1">
    <property type="organism ID" value="7427"/>
</dbReference>
<dbReference type="BRENDA" id="1.8.98.5">
    <property type="organism ID" value="7427"/>
</dbReference>
<dbReference type="UniPathway" id="UPA00647">
    <property type="reaction ID" value="UER00700"/>
</dbReference>
<dbReference type="Proteomes" id="UP000000345">
    <property type="component" value="Chromosome"/>
</dbReference>
<dbReference type="GO" id="GO:0016020">
    <property type="term" value="C:membrane"/>
    <property type="evidence" value="ECO:0000303"/>
    <property type="project" value="UniProtKB"/>
</dbReference>
<dbReference type="GO" id="GO:0051912">
    <property type="term" value="F:CoB--CoM heterodisulfide reductase activity"/>
    <property type="evidence" value="ECO:0000314"/>
    <property type="project" value="UniProtKB"/>
</dbReference>
<dbReference type="GO" id="GO:0015948">
    <property type="term" value="P:methanogenesis"/>
    <property type="evidence" value="ECO:0000314"/>
    <property type="project" value="UniProtKB"/>
</dbReference>
<dbReference type="Gene3D" id="1.20.1050.140">
    <property type="match status" value="1"/>
</dbReference>
<dbReference type="Gene3D" id="3.40.50.11810">
    <property type="match status" value="1"/>
</dbReference>
<dbReference type="InterPro" id="IPR017678">
    <property type="entry name" value="CoB/CoM_hetero-S_Rdtase_bsu"/>
</dbReference>
<dbReference type="InterPro" id="IPR004017">
    <property type="entry name" value="Cys_rich_dom"/>
</dbReference>
<dbReference type="InterPro" id="IPR051278">
    <property type="entry name" value="HdrB/HdrD_reductase"/>
</dbReference>
<dbReference type="NCBIfam" id="TIGR03288">
    <property type="entry name" value="CoB_CoM_SS_B"/>
    <property type="match status" value="1"/>
</dbReference>
<dbReference type="PANTHER" id="PTHR42947">
    <property type="entry name" value="COB--COM HETERODISULFIDE REDUCTASE SUBUNIT B 1"/>
    <property type="match status" value="1"/>
</dbReference>
<dbReference type="PANTHER" id="PTHR42947:SF1">
    <property type="entry name" value="COB--COM HETERODISULFIDE REDUCTASE SUBUNIT B 1"/>
    <property type="match status" value="1"/>
</dbReference>
<dbReference type="Pfam" id="PF02754">
    <property type="entry name" value="CCG"/>
    <property type="match status" value="2"/>
</dbReference>
<comment type="function">
    <text evidence="2 3 4">Part of a complex that catalyzes the reversible reduction of CoM-S-S-CoB to the thiol-coenzymes H-S-CoM (coenzyme M) and H-S-CoB (coenzyme B).</text>
</comment>
<comment type="catalytic activity">
    <reaction evidence="3 6">
        <text>coenzyme B + coenzyme M + 2 reduced [2Fe-2S]-[ferredoxin] + 2 H(+) = coenzyme M-coenzyme B heterodisulfide + 2 H2 + 2 oxidized [2Fe-2S]-[ferredoxin]</text>
        <dbReference type="Rhea" id="RHEA:55748"/>
        <dbReference type="Rhea" id="RHEA-COMP:10000"/>
        <dbReference type="Rhea" id="RHEA-COMP:10001"/>
        <dbReference type="ChEBI" id="CHEBI:15378"/>
        <dbReference type="ChEBI" id="CHEBI:18276"/>
        <dbReference type="ChEBI" id="CHEBI:33737"/>
        <dbReference type="ChEBI" id="CHEBI:33738"/>
        <dbReference type="ChEBI" id="CHEBI:58319"/>
        <dbReference type="ChEBI" id="CHEBI:58411"/>
        <dbReference type="ChEBI" id="CHEBI:58596"/>
        <dbReference type="EC" id="1.8.98.5"/>
    </reaction>
</comment>
<comment type="pathway">
    <text evidence="5">Cofactor metabolism; coenzyme M-coenzyme B heterodisulfide reduction; coenzyme B and coenzyme M from coenzyme M-coenzyme B heterodisulfide: step 1/1.</text>
</comment>
<comment type="subunit">
    <text evidence="1 2 3 4">The heterodisulfide reductase is composed of three subunits; HdrA, HdrB and HdrC. It forms a complex with the F420-non-reducing hydrogenase (Mvh), which provides the reducing equivalents to the heterodisulfide reductase.</text>
</comment>
<comment type="similarity">
    <text evidence="5">Belongs to the HdrB family.</text>
</comment>